<sequence>MSVIKEYRTASEVVGPLMIVEQVNNVSYNELVEIQLHNGEIRRGQVLEIHEDKAMVQLFEGSSGINLEKSKIRFAGHALELAVSEDMVGRIFNGMGKPIDGGPDLIPEKYLDIDGQAINPVSRDYPDEFIQTGISSIDHLNTLVRGQKLPVFSGSGLPHNELAAQIARQATVLNSDENFAVVFAAMGITFEEAEFFMEELRKTGAIDRSVLFMNLANDPAIERIATPRIALTAAEYLAFEKDMHVLVIMTDMTNYCEALREVSAARREVPGRRGYPGYLYTNLSTLYERAGRLVGKKGSVTQIPILTMPEDDITHPIPDLTGYITEGQIILSHELYNQGYRPPINVLSSLSRLKDKGSGEGKTRGDHAPTMNQLFAAYAQGKKVEELAVVLGESALSDVDKLYVRFTKRFEEEYINQGFYKNRNIEDTLNLGWELLSILPRTELKRIKDDLLDKYLPLVEV</sequence>
<evidence type="ECO:0000255" key="1">
    <source>
        <dbReference type="HAMAP-Rule" id="MF_00310"/>
    </source>
</evidence>
<feature type="chain" id="PRO_1000115665" description="V-type ATP synthase beta chain">
    <location>
        <begin position="1"/>
        <end position="461"/>
    </location>
</feature>
<organism>
    <name type="scientific">Streptococcus pneumoniae (strain CGSP14)</name>
    <dbReference type="NCBI Taxonomy" id="516950"/>
    <lineage>
        <taxon>Bacteria</taxon>
        <taxon>Bacillati</taxon>
        <taxon>Bacillota</taxon>
        <taxon>Bacilli</taxon>
        <taxon>Lactobacillales</taxon>
        <taxon>Streptococcaceae</taxon>
        <taxon>Streptococcus</taxon>
    </lineage>
</organism>
<protein>
    <recommendedName>
        <fullName evidence="1">V-type ATP synthase beta chain</fullName>
    </recommendedName>
    <alternativeName>
        <fullName evidence="1">V-ATPase subunit B</fullName>
    </alternativeName>
</protein>
<gene>
    <name evidence="1" type="primary">atpB</name>
    <name type="ordered locus">SPCG_0863</name>
</gene>
<comment type="function">
    <text evidence="1">Produces ATP from ADP in the presence of a proton gradient across the membrane. The V-type beta chain is a regulatory subunit.</text>
</comment>
<comment type="similarity">
    <text evidence="1">Belongs to the ATPase alpha/beta chains family.</text>
</comment>
<keyword id="KW-0066">ATP synthesis</keyword>
<keyword id="KW-0375">Hydrogen ion transport</keyword>
<keyword id="KW-0406">Ion transport</keyword>
<keyword id="KW-0813">Transport</keyword>
<name>VATB_STRPS</name>
<dbReference type="EMBL" id="CP001033">
    <property type="protein sequence ID" value="ACB90115.1"/>
    <property type="molecule type" value="Genomic_DNA"/>
</dbReference>
<dbReference type="RefSeq" id="WP_000111249.1">
    <property type="nucleotide sequence ID" value="NC_010582.1"/>
</dbReference>
<dbReference type="SMR" id="B2IP44"/>
<dbReference type="KEGG" id="spw:SPCG_0863"/>
<dbReference type="HOGENOM" id="CLU_022916_0_0_9"/>
<dbReference type="GO" id="GO:0005524">
    <property type="term" value="F:ATP binding"/>
    <property type="evidence" value="ECO:0007669"/>
    <property type="project" value="UniProtKB-UniRule"/>
</dbReference>
<dbReference type="GO" id="GO:0046933">
    <property type="term" value="F:proton-transporting ATP synthase activity, rotational mechanism"/>
    <property type="evidence" value="ECO:0007669"/>
    <property type="project" value="UniProtKB-UniRule"/>
</dbReference>
<dbReference type="GO" id="GO:0042777">
    <property type="term" value="P:proton motive force-driven plasma membrane ATP synthesis"/>
    <property type="evidence" value="ECO:0007669"/>
    <property type="project" value="UniProtKB-UniRule"/>
</dbReference>
<dbReference type="CDD" id="cd18112">
    <property type="entry name" value="ATP-synt_V_A-type_beta_C"/>
    <property type="match status" value="1"/>
</dbReference>
<dbReference type="CDD" id="cd18118">
    <property type="entry name" value="ATP-synt_V_A-type_beta_N"/>
    <property type="match status" value="1"/>
</dbReference>
<dbReference type="CDD" id="cd01135">
    <property type="entry name" value="V_A-ATPase_B"/>
    <property type="match status" value="1"/>
</dbReference>
<dbReference type="Gene3D" id="3.40.50.12240">
    <property type="match status" value="1"/>
</dbReference>
<dbReference type="HAMAP" id="MF_00310">
    <property type="entry name" value="ATP_synth_B_arch"/>
    <property type="match status" value="1"/>
</dbReference>
<dbReference type="InterPro" id="IPR055190">
    <property type="entry name" value="ATP-synt_VA_C"/>
</dbReference>
<dbReference type="InterPro" id="IPR004100">
    <property type="entry name" value="ATPase_F1/V1/A1_a/bsu_N"/>
</dbReference>
<dbReference type="InterPro" id="IPR000194">
    <property type="entry name" value="ATPase_F1/V1/A1_a/bsu_nucl-bd"/>
</dbReference>
<dbReference type="InterPro" id="IPR027417">
    <property type="entry name" value="P-loop_NTPase"/>
</dbReference>
<dbReference type="InterPro" id="IPR022879">
    <property type="entry name" value="V-ATPase_su_B/beta"/>
</dbReference>
<dbReference type="NCBIfam" id="NF003235">
    <property type="entry name" value="PRK04196.1"/>
    <property type="match status" value="1"/>
</dbReference>
<dbReference type="PANTHER" id="PTHR43389">
    <property type="entry name" value="V-TYPE PROTON ATPASE SUBUNIT B"/>
    <property type="match status" value="1"/>
</dbReference>
<dbReference type="PANTHER" id="PTHR43389:SF4">
    <property type="entry name" value="V-TYPE PROTON ATPASE SUBUNIT B"/>
    <property type="match status" value="1"/>
</dbReference>
<dbReference type="Pfam" id="PF00006">
    <property type="entry name" value="ATP-synt_ab"/>
    <property type="match status" value="1"/>
</dbReference>
<dbReference type="Pfam" id="PF02874">
    <property type="entry name" value="ATP-synt_ab_N"/>
    <property type="match status" value="1"/>
</dbReference>
<dbReference type="Pfam" id="PF22919">
    <property type="entry name" value="ATP-synt_VA_C"/>
    <property type="match status" value="1"/>
</dbReference>
<dbReference type="PIRSF" id="PIRSF039114">
    <property type="entry name" value="V-ATPsynth_beta/V-ATPase_B"/>
    <property type="match status" value="1"/>
</dbReference>
<dbReference type="SUPFAM" id="SSF47917">
    <property type="entry name" value="C-terminal domain of alpha and beta subunits of F1 ATP synthase"/>
    <property type="match status" value="1"/>
</dbReference>
<dbReference type="SUPFAM" id="SSF52540">
    <property type="entry name" value="P-loop containing nucleoside triphosphate hydrolases"/>
    <property type="match status" value="1"/>
</dbReference>
<accession>B2IP44</accession>
<proteinExistence type="inferred from homology"/>
<reference key="1">
    <citation type="journal article" date="2009" name="BMC Genomics">
        <title>Genome evolution driven by host adaptations results in a more virulent and antimicrobial-resistant Streptococcus pneumoniae serotype 14.</title>
        <authorList>
            <person name="Ding F."/>
            <person name="Tang P."/>
            <person name="Hsu M.-H."/>
            <person name="Cui P."/>
            <person name="Hu S."/>
            <person name="Yu J."/>
            <person name="Chiu C.-H."/>
        </authorList>
    </citation>
    <scope>NUCLEOTIDE SEQUENCE [LARGE SCALE GENOMIC DNA]</scope>
    <source>
        <strain>CGSP14</strain>
    </source>
</reference>